<proteinExistence type="inferred from homology"/>
<evidence type="ECO:0000250" key="1">
    <source>
        <dbReference type="UniProtKB" id="P36164"/>
    </source>
</evidence>
<evidence type="ECO:0000255" key="2"/>
<evidence type="ECO:0000305" key="3"/>
<comment type="function">
    <text>Golgi membrane protein involved in vesicular trafficking and spindle migration.</text>
</comment>
<comment type="subcellular location">
    <subcellularLocation>
        <location>Golgi apparatus membrane</location>
        <topology>Multi-pass membrane protein</topology>
    </subcellularLocation>
</comment>
<comment type="domain">
    <text evidence="1">The VTT domain was previously called the SNARE-assoc domain. As there is no evidence that this domain associates with SNARE proteins, it was renamed as VMP1, TMEM41, and TVP38 (VTT) domain.</text>
</comment>
<comment type="similarity">
    <text evidence="3">Belongs to the TVP38/TMEM64 family.</text>
</comment>
<reference key="1">
    <citation type="journal article" date="2010" name="Proc. Natl. Acad. Sci. U.S.A.">
        <title>Insights into evolution of multicellular fungi from the assembled chromosomes of the mushroom Coprinopsis cinerea (Coprinus cinereus).</title>
        <authorList>
            <person name="Stajich J.E."/>
            <person name="Wilke S.K."/>
            <person name="Ahren D."/>
            <person name="Au C.H."/>
            <person name="Birren B.W."/>
            <person name="Borodovsky M."/>
            <person name="Burns C."/>
            <person name="Canbaeck B."/>
            <person name="Casselton L.A."/>
            <person name="Cheng C.K."/>
            <person name="Deng J."/>
            <person name="Dietrich F.S."/>
            <person name="Fargo D.C."/>
            <person name="Farman M.L."/>
            <person name="Gathman A.C."/>
            <person name="Goldberg J."/>
            <person name="Guigo R."/>
            <person name="Hoegger P.J."/>
            <person name="Hooker J.B."/>
            <person name="Huggins A."/>
            <person name="James T.Y."/>
            <person name="Kamada T."/>
            <person name="Kilaru S."/>
            <person name="Kodira C."/>
            <person name="Kuees U."/>
            <person name="Kupfer D."/>
            <person name="Kwan H.S."/>
            <person name="Lomsadze A."/>
            <person name="Li W."/>
            <person name="Lilly W.W."/>
            <person name="Ma L.-J."/>
            <person name="Mackey A.J."/>
            <person name="Manning G."/>
            <person name="Martin F."/>
            <person name="Muraguchi H."/>
            <person name="Natvig D.O."/>
            <person name="Palmerini H."/>
            <person name="Ramesh M.A."/>
            <person name="Rehmeyer C.J."/>
            <person name="Roe B.A."/>
            <person name="Shenoy N."/>
            <person name="Stanke M."/>
            <person name="Ter-Hovhannisyan V."/>
            <person name="Tunlid A."/>
            <person name="Velagapudi R."/>
            <person name="Vision T.J."/>
            <person name="Zeng Q."/>
            <person name="Zolan M.E."/>
            <person name="Pukkila P.J."/>
        </authorList>
    </citation>
    <scope>NUCLEOTIDE SEQUENCE [LARGE SCALE GENOMIC DNA]</scope>
    <source>
        <strain>Okayama-7 / 130 / ATCC MYA-4618 / FGSC 9003</strain>
    </source>
</reference>
<sequence>MAADSTPGSHHRNLFFQYGKAAIHRYHRLHLYGKAFIWLVILFYIAFGVFVIIVTPARIAQFLYDQAKLLAATRFGWVALLLSIICISFPPLIGHTTLVTLCGFAYGMKGFYIAFAGSILGSALVFVVLRFLFTEKIRSWSAQNEKWQALEAVVRSKGLPLIVLIRVSPFPPWVYANSLFASIEPVKLWQFVAATCFITPKLLLYVFMGSKMAALSDGDQRDRMDTHDKIINGLFLAGSLVIAVFTSWLVYNLVQNHIRHLHGVDPETDELAAEAIEDFDEDAPLLSPTASHRV</sequence>
<dbReference type="EMBL" id="AACS02000005">
    <property type="protein sequence ID" value="EAU84702.1"/>
    <property type="molecule type" value="Genomic_DNA"/>
</dbReference>
<dbReference type="RefSeq" id="XP_001837085.1">
    <property type="nucleotide sequence ID" value="XM_001837033.1"/>
</dbReference>
<dbReference type="FunCoup" id="A8NX72">
    <property type="interactions" value="27"/>
</dbReference>
<dbReference type="STRING" id="240176.A8NX72"/>
<dbReference type="GeneID" id="6013641"/>
<dbReference type="KEGG" id="cci:CC1G_00221"/>
<dbReference type="VEuPathDB" id="FungiDB:CC1G_00221"/>
<dbReference type="eggNOG" id="KOG3140">
    <property type="taxonomic scope" value="Eukaryota"/>
</dbReference>
<dbReference type="HOGENOM" id="CLU_041954_2_0_1"/>
<dbReference type="InParanoid" id="A8NX72"/>
<dbReference type="OMA" id="KWQALET"/>
<dbReference type="OrthoDB" id="166803at2759"/>
<dbReference type="Proteomes" id="UP000001861">
    <property type="component" value="Unassembled WGS sequence"/>
</dbReference>
<dbReference type="GO" id="GO:0000139">
    <property type="term" value="C:Golgi membrane"/>
    <property type="evidence" value="ECO:0007669"/>
    <property type="project" value="UniProtKB-SubCell"/>
</dbReference>
<dbReference type="GO" id="GO:0000022">
    <property type="term" value="P:mitotic spindle elongation"/>
    <property type="evidence" value="ECO:0007669"/>
    <property type="project" value="TreeGrafter"/>
</dbReference>
<dbReference type="GO" id="GO:0016192">
    <property type="term" value="P:vesicle-mediated transport"/>
    <property type="evidence" value="ECO:0007669"/>
    <property type="project" value="TreeGrafter"/>
</dbReference>
<dbReference type="InterPro" id="IPR051076">
    <property type="entry name" value="Golgi_membrane_TVP38/TMEM64"/>
</dbReference>
<dbReference type="InterPro" id="IPR032816">
    <property type="entry name" value="VTT_dom"/>
</dbReference>
<dbReference type="PANTHER" id="PTHR47549:SF1">
    <property type="entry name" value="GOLGI APPARATUS MEMBRANE PROTEIN TVP38"/>
    <property type="match status" value="1"/>
</dbReference>
<dbReference type="PANTHER" id="PTHR47549">
    <property type="entry name" value="GOLGI APPARATUS MEMBRANE PROTEIN TVP38-RELATED"/>
    <property type="match status" value="1"/>
</dbReference>
<dbReference type="Pfam" id="PF09335">
    <property type="entry name" value="VTT_dom"/>
    <property type="match status" value="1"/>
</dbReference>
<protein>
    <recommendedName>
        <fullName>Golgi apparatus membrane protein TVP38</fullName>
    </recommendedName>
</protein>
<feature type="chain" id="PRO_0000343067" description="Golgi apparatus membrane protein TVP38">
    <location>
        <begin position="1"/>
        <end position="294"/>
    </location>
</feature>
<feature type="topological domain" description="Lumenal" evidence="2">
    <location>
        <begin position="1"/>
        <end position="34"/>
    </location>
</feature>
<feature type="transmembrane region" description="Helical" evidence="2">
    <location>
        <begin position="35"/>
        <end position="55"/>
    </location>
</feature>
<feature type="topological domain" description="Cytoplasmic" evidence="2">
    <location>
        <begin position="56"/>
        <end position="74"/>
    </location>
</feature>
<feature type="transmembrane region" description="Helical" evidence="2">
    <location>
        <begin position="75"/>
        <end position="95"/>
    </location>
</feature>
<feature type="topological domain" description="Lumenal" evidence="2">
    <location>
        <begin position="96"/>
        <end position="112"/>
    </location>
</feature>
<feature type="transmembrane region" description="Helical" evidence="2">
    <location>
        <begin position="113"/>
        <end position="133"/>
    </location>
</feature>
<feature type="topological domain" description="Cytoplasmic" evidence="2">
    <location>
        <begin position="134"/>
        <end position="187"/>
    </location>
</feature>
<feature type="transmembrane region" description="Helical" evidence="2">
    <location>
        <begin position="188"/>
        <end position="208"/>
    </location>
</feature>
<feature type="topological domain" description="Lumenal" evidence="2">
    <location>
        <begin position="209"/>
        <end position="229"/>
    </location>
</feature>
<feature type="transmembrane region" description="Helical" evidence="2">
    <location>
        <begin position="230"/>
        <end position="250"/>
    </location>
</feature>
<feature type="topological domain" description="Cytoplasmic" evidence="2">
    <location>
        <begin position="251"/>
        <end position="294"/>
    </location>
</feature>
<feature type="region of interest" description="VTT domain" evidence="1">
    <location>
        <begin position="103"/>
        <end position="212"/>
    </location>
</feature>
<name>TVP38_COPC7</name>
<keyword id="KW-0333">Golgi apparatus</keyword>
<keyword id="KW-0472">Membrane</keyword>
<keyword id="KW-1185">Reference proteome</keyword>
<keyword id="KW-0812">Transmembrane</keyword>
<keyword id="KW-1133">Transmembrane helix</keyword>
<gene>
    <name type="primary">TVP38</name>
    <name type="ORF">CC1G_00221</name>
</gene>
<accession>A8NX72</accession>
<organism>
    <name type="scientific">Coprinopsis cinerea (strain Okayama-7 / 130 / ATCC MYA-4618 / FGSC 9003)</name>
    <name type="common">Inky cap fungus</name>
    <name type="synonym">Hormographiella aspergillata</name>
    <dbReference type="NCBI Taxonomy" id="240176"/>
    <lineage>
        <taxon>Eukaryota</taxon>
        <taxon>Fungi</taxon>
        <taxon>Dikarya</taxon>
        <taxon>Basidiomycota</taxon>
        <taxon>Agaricomycotina</taxon>
        <taxon>Agaricomycetes</taxon>
        <taxon>Agaricomycetidae</taxon>
        <taxon>Agaricales</taxon>
        <taxon>Agaricineae</taxon>
        <taxon>Psathyrellaceae</taxon>
        <taxon>Coprinopsis</taxon>
    </lineage>
</organism>